<feature type="chain" id="PRO_1000119377" description="Pyridoxine 5'-phosphate synthase">
    <location>
        <begin position="1"/>
        <end position="241"/>
    </location>
</feature>
<feature type="active site" description="Proton acceptor" evidence="1">
    <location>
        <position position="43"/>
    </location>
</feature>
<feature type="active site" description="Proton acceptor" evidence="1">
    <location>
        <position position="70"/>
    </location>
</feature>
<feature type="active site" description="Proton donor" evidence="1">
    <location>
        <position position="191"/>
    </location>
</feature>
<feature type="binding site" evidence="1">
    <location>
        <position position="7"/>
    </location>
    <ligand>
        <name>3-amino-2-oxopropyl phosphate</name>
        <dbReference type="ChEBI" id="CHEBI:57279"/>
    </ligand>
</feature>
<feature type="binding site" evidence="1">
    <location>
        <begin position="9"/>
        <end position="10"/>
    </location>
    <ligand>
        <name>1-deoxy-D-xylulose 5-phosphate</name>
        <dbReference type="ChEBI" id="CHEBI:57792"/>
    </ligand>
</feature>
<feature type="binding site" evidence="1">
    <location>
        <position position="18"/>
    </location>
    <ligand>
        <name>3-amino-2-oxopropyl phosphate</name>
        <dbReference type="ChEBI" id="CHEBI:57279"/>
    </ligand>
</feature>
<feature type="binding site" evidence="1">
    <location>
        <position position="45"/>
    </location>
    <ligand>
        <name>1-deoxy-D-xylulose 5-phosphate</name>
        <dbReference type="ChEBI" id="CHEBI:57792"/>
    </ligand>
</feature>
<feature type="binding site" evidence="1">
    <location>
        <position position="50"/>
    </location>
    <ligand>
        <name>1-deoxy-D-xylulose 5-phosphate</name>
        <dbReference type="ChEBI" id="CHEBI:57792"/>
    </ligand>
</feature>
<feature type="binding site" evidence="1">
    <location>
        <position position="100"/>
    </location>
    <ligand>
        <name>1-deoxy-D-xylulose 5-phosphate</name>
        <dbReference type="ChEBI" id="CHEBI:57792"/>
    </ligand>
</feature>
<feature type="binding site" evidence="1">
    <location>
        <position position="192"/>
    </location>
    <ligand>
        <name>3-amino-2-oxopropyl phosphate</name>
        <dbReference type="ChEBI" id="CHEBI:57279"/>
    </ligand>
</feature>
<feature type="binding site" evidence="1">
    <location>
        <begin position="213"/>
        <end position="214"/>
    </location>
    <ligand>
        <name>3-amino-2-oxopropyl phosphate</name>
        <dbReference type="ChEBI" id="CHEBI:57279"/>
    </ligand>
</feature>
<feature type="site" description="Transition state stabilizer" evidence="1">
    <location>
        <position position="151"/>
    </location>
</feature>
<comment type="function">
    <text evidence="1">Catalyzes the complicated ring closure reaction between the two acyclic compounds 1-deoxy-D-xylulose-5-phosphate (DXP) and 3-amino-2-oxopropyl phosphate (1-amino-acetone-3-phosphate or AAP) to form pyridoxine 5'-phosphate (PNP) and inorganic phosphate.</text>
</comment>
<comment type="catalytic activity">
    <reaction evidence="1">
        <text>3-amino-2-oxopropyl phosphate + 1-deoxy-D-xylulose 5-phosphate = pyridoxine 5'-phosphate + phosphate + 2 H2O + H(+)</text>
        <dbReference type="Rhea" id="RHEA:15265"/>
        <dbReference type="ChEBI" id="CHEBI:15377"/>
        <dbReference type="ChEBI" id="CHEBI:15378"/>
        <dbReference type="ChEBI" id="CHEBI:43474"/>
        <dbReference type="ChEBI" id="CHEBI:57279"/>
        <dbReference type="ChEBI" id="CHEBI:57792"/>
        <dbReference type="ChEBI" id="CHEBI:58589"/>
        <dbReference type="EC" id="2.6.99.2"/>
    </reaction>
</comment>
<comment type="pathway">
    <text evidence="1">Cofactor biosynthesis; pyridoxine 5'-phosphate biosynthesis; pyridoxine 5'-phosphate from D-erythrose 4-phosphate: step 5/5.</text>
</comment>
<comment type="subunit">
    <text evidence="1">Homooctamer; tetramer of dimers.</text>
</comment>
<comment type="subcellular location">
    <subcellularLocation>
        <location evidence="1">Cytoplasm</location>
    </subcellularLocation>
</comment>
<comment type="similarity">
    <text evidence="1">Belongs to the PNP synthase family.</text>
</comment>
<reference key="1">
    <citation type="journal article" date="2008" name="BMC Genomics">
        <title>Acidithiobacillus ferrooxidans metabolism: from genome sequence to industrial applications.</title>
        <authorList>
            <person name="Valdes J."/>
            <person name="Pedroso I."/>
            <person name="Quatrini R."/>
            <person name="Dodson R.J."/>
            <person name="Tettelin H."/>
            <person name="Blake R. II"/>
            <person name="Eisen J.A."/>
            <person name="Holmes D.S."/>
        </authorList>
    </citation>
    <scope>NUCLEOTIDE SEQUENCE [LARGE SCALE GENOMIC DNA]</scope>
    <source>
        <strain>ATCC 23270 / DSM 14882 / CIP 104768 / NCIMB 8455</strain>
    </source>
</reference>
<keyword id="KW-0963">Cytoplasm</keyword>
<keyword id="KW-0664">Pyridoxine biosynthesis</keyword>
<keyword id="KW-1185">Reference proteome</keyword>
<keyword id="KW-0808">Transferase</keyword>
<evidence type="ECO:0000255" key="1">
    <source>
        <dbReference type="HAMAP-Rule" id="MF_00279"/>
    </source>
</evidence>
<sequence>MIALGVNIDHVATLRQARGTRYPDPVEAAFVAERAGADAITAHLREDRRHIVERDVEILSQTLRTRLNLEMAVEEGVLRVAERLSPSDCCLVPERRAELTTEGGLDVAGQLSRIKEACQRLAAAKVRVSLFVDPDPFQLEAAMETGAPVVELHTGRYANTADTATRAEELGQITSAASFADSLGLQVNAGHGLDYHNVQAVAAIPYIRELNIGHAIVAHAVFVGMATAVADMKRLMLEARG</sequence>
<name>PDXJ_ACIF2</name>
<dbReference type="EC" id="2.6.99.2" evidence="1"/>
<dbReference type="EMBL" id="CP001219">
    <property type="protein sequence ID" value="ACK79826.1"/>
    <property type="molecule type" value="Genomic_DNA"/>
</dbReference>
<dbReference type="RefSeq" id="WP_012536500.1">
    <property type="nucleotide sequence ID" value="NC_011761.1"/>
</dbReference>
<dbReference type="SMR" id="B7J9K4"/>
<dbReference type="STRING" id="243159.AFE_1403"/>
<dbReference type="PaxDb" id="243159-AFE_1403"/>
<dbReference type="GeneID" id="65280634"/>
<dbReference type="KEGG" id="afr:AFE_1403"/>
<dbReference type="eggNOG" id="COG0854">
    <property type="taxonomic scope" value="Bacteria"/>
</dbReference>
<dbReference type="HOGENOM" id="CLU_074563_0_0_6"/>
<dbReference type="UniPathway" id="UPA00244">
    <property type="reaction ID" value="UER00313"/>
</dbReference>
<dbReference type="Proteomes" id="UP000001362">
    <property type="component" value="Chromosome"/>
</dbReference>
<dbReference type="GO" id="GO:0005829">
    <property type="term" value="C:cytosol"/>
    <property type="evidence" value="ECO:0007669"/>
    <property type="project" value="TreeGrafter"/>
</dbReference>
<dbReference type="GO" id="GO:0033856">
    <property type="term" value="F:pyridoxine 5'-phosphate synthase activity"/>
    <property type="evidence" value="ECO:0007669"/>
    <property type="project" value="UniProtKB-EC"/>
</dbReference>
<dbReference type="GO" id="GO:0008615">
    <property type="term" value="P:pyridoxine biosynthetic process"/>
    <property type="evidence" value="ECO:0007669"/>
    <property type="project" value="UniProtKB-UniRule"/>
</dbReference>
<dbReference type="CDD" id="cd00003">
    <property type="entry name" value="PNPsynthase"/>
    <property type="match status" value="1"/>
</dbReference>
<dbReference type="FunFam" id="3.20.20.70:FF:000042">
    <property type="entry name" value="Pyridoxine 5'-phosphate synthase"/>
    <property type="match status" value="1"/>
</dbReference>
<dbReference type="Gene3D" id="3.20.20.70">
    <property type="entry name" value="Aldolase class I"/>
    <property type="match status" value="1"/>
</dbReference>
<dbReference type="HAMAP" id="MF_00279">
    <property type="entry name" value="PdxJ"/>
    <property type="match status" value="1"/>
</dbReference>
<dbReference type="InterPro" id="IPR013785">
    <property type="entry name" value="Aldolase_TIM"/>
</dbReference>
<dbReference type="InterPro" id="IPR004569">
    <property type="entry name" value="PyrdxlP_synth_PdxJ"/>
</dbReference>
<dbReference type="InterPro" id="IPR036130">
    <property type="entry name" value="Pyridoxine-5'_phos_synth"/>
</dbReference>
<dbReference type="NCBIfam" id="TIGR00559">
    <property type="entry name" value="pdxJ"/>
    <property type="match status" value="1"/>
</dbReference>
<dbReference type="NCBIfam" id="NF003623">
    <property type="entry name" value="PRK05265.1-1"/>
    <property type="match status" value="1"/>
</dbReference>
<dbReference type="NCBIfam" id="NF003625">
    <property type="entry name" value="PRK05265.1-3"/>
    <property type="match status" value="1"/>
</dbReference>
<dbReference type="NCBIfam" id="NF003627">
    <property type="entry name" value="PRK05265.1-5"/>
    <property type="match status" value="1"/>
</dbReference>
<dbReference type="PANTHER" id="PTHR30456">
    <property type="entry name" value="PYRIDOXINE 5'-PHOSPHATE SYNTHASE"/>
    <property type="match status" value="1"/>
</dbReference>
<dbReference type="PANTHER" id="PTHR30456:SF0">
    <property type="entry name" value="PYRIDOXINE 5'-PHOSPHATE SYNTHASE"/>
    <property type="match status" value="1"/>
</dbReference>
<dbReference type="Pfam" id="PF03740">
    <property type="entry name" value="PdxJ"/>
    <property type="match status" value="1"/>
</dbReference>
<dbReference type="SUPFAM" id="SSF63892">
    <property type="entry name" value="Pyridoxine 5'-phosphate synthase"/>
    <property type="match status" value="1"/>
</dbReference>
<accession>B7J9K4</accession>
<protein>
    <recommendedName>
        <fullName evidence="1">Pyridoxine 5'-phosphate synthase</fullName>
        <shortName evidence="1">PNP synthase</shortName>
        <ecNumber evidence="1">2.6.99.2</ecNumber>
    </recommendedName>
</protein>
<gene>
    <name evidence="1" type="primary">pdxJ</name>
    <name type="ordered locus">AFE_1403</name>
</gene>
<organism>
    <name type="scientific">Acidithiobacillus ferrooxidans (strain ATCC 23270 / DSM 14882 / CIP 104768 / NCIMB 8455)</name>
    <name type="common">Ferrobacillus ferrooxidans (strain ATCC 23270)</name>
    <dbReference type="NCBI Taxonomy" id="243159"/>
    <lineage>
        <taxon>Bacteria</taxon>
        <taxon>Pseudomonadati</taxon>
        <taxon>Pseudomonadota</taxon>
        <taxon>Acidithiobacillia</taxon>
        <taxon>Acidithiobacillales</taxon>
        <taxon>Acidithiobacillaceae</taxon>
        <taxon>Acidithiobacillus</taxon>
    </lineage>
</organism>
<proteinExistence type="inferred from homology"/>